<proteinExistence type="evidence at protein level"/>
<gene>
    <name type="primary">NUP49</name>
    <name type="synonym">NSP49</name>
    <name type="ordered locus">YGL172W</name>
    <name type="ORF">G1648</name>
</gene>
<keyword id="KW-0002">3D-structure</keyword>
<keyword id="KW-0175">Coiled coil</keyword>
<keyword id="KW-0472">Membrane</keyword>
<keyword id="KW-0509">mRNA transport</keyword>
<keyword id="KW-0906">Nuclear pore complex</keyword>
<keyword id="KW-0539">Nucleus</keyword>
<keyword id="KW-0653">Protein transport</keyword>
<keyword id="KW-1185">Reference proteome</keyword>
<keyword id="KW-0677">Repeat</keyword>
<keyword id="KW-0811">Translocation</keyword>
<keyword id="KW-0813">Transport</keyword>
<comment type="function">
    <text evidence="2 3 4 5 7 8 9 10 11">Functions as a component of the nuclear pore complex (NPC). NPC components, collectively referred to as nucleoporins (NUPs), can play the role of both NPC structural components and of docking or interaction partners for transiently associated nuclear transport factors. Active directional transport is assured by both, a Phe-Gly (FG) repeat affinity gradient for these transport factors across the NPC and a transport cofactor concentration gradient across the nuclear envelope (GSP1 and GSP2 GTPases associated predominantly with GTP in the nucleus, with GDP in the cytoplasm). NUP49 plays an important role in several nuclear transport pathways including poly(A)+ RNA, tRNA, and pre-ribosome transport.</text>
</comment>
<comment type="subunit">
    <text evidence="2">Component of the nuclear pore complex (NPC). NPC constitutes the exclusive means of nucleocytoplasmic transport. NPCs allow the passive diffusion of ions and small molecules and the active, nuclear transport receptor-mediated bidirectional transport of macromolecules such as proteins, RNAs, ribonucleoparticles (RNPs), and ribosomal subunits across the nuclear envelope. Due to its 8-fold rotational symmetry, all subunits are present with 8 copies or multiples thereof. NUP49 is part of the NUP57 subcomplex (NIC96, NSP1, NUP49, NUP57) interacting with NUP57. Interacts through its FG repeats with karyopherins.</text>
</comment>
<comment type="interaction">
    <interactant intactId="EBI-12315">
        <id>Q02199</id>
    </interactant>
    <interactant intactId="EBI-9145">
        <id>Q06142</id>
        <label>KAP95</label>
    </interactant>
    <organismsDiffer>false</organismsDiffer>
    <experiments>2</experiments>
</comment>
<comment type="interaction">
    <interactant intactId="EBI-12315">
        <id>Q02199</id>
    </interactant>
    <interactant intactId="EBI-12056">
        <id>P34077</id>
        <label>NIC96</label>
    </interactant>
    <organismsDiffer>false</organismsDiffer>
    <experiments>4</experiments>
</comment>
<comment type="interaction">
    <interactant intactId="EBI-12315">
        <id>Q02199</id>
    </interactant>
    <interactant intactId="EBI-12265">
        <id>P14907</id>
        <label>NSP1</label>
    </interactant>
    <organismsDiffer>false</organismsDiffer>
    <experiments>3</experiments>
</comment>
<comment type="interaction">
    <interactant intactId="EBI-12315">
        <id>Q02199</id>
    </interactant>
    <interactant intactId="EBI-12315">
        <id>Q02199</id>
        <label>NUP49</label>
    </interactant>
    <organismsDiffer>false</organismsDiffer>
    <experiments>4</experiments>
</comment>
<comment type="interaction">
    <interactant intactId="EBI-12315">
        <id>Q02199</id>
    </interactant>
    <interactant intactId="EBI-12324">
        <id>P48837</id>
        <label>NUP57</label>
    </interactant>
    <organismsDiffer>false</organismsDiffer>
    <experiments>10</experiments>
</comment>
<comment type="subcellular location">
    <subcellularLocation>
        <location evidence="2">Nucleus</location>
        <location evidence="2">Nuclear pore complex</location>
    </subcellularLocation>
    <subcellularLocation>
        <location>Nucleus membrane</location>
        <topology>Peripheral membrane protein</topology>
        <orientation>Cytoplasmic side</orientation>
    </subcellularLocation>
    <subcellularLocation>
        <location>Nucleus membrane</location>
        <topology>Peripheral membrane protein</topology>
        <orientation>Nucleoplasmic side</orientation>
    </subcellularLocation>
    <text>Symmetric distribution.</text>
</comment>
<comment type="domain">
    <text>Contains FG repeats. FG repeats are interaction sites for karyopherins (importins, exportins) and form probably an affinity gradient, guiding the transport proteins unidirectionally with their cargo through the NPC. FG repeat regions are highly flexible and lack ordered secondary structure. The overall conservation of FG repeats regarding exact sequence, spacing, and repeat unit length is limited. FG repeat types and their physico-chemical environment change across the NPC from the nucleoplasmic to the cytoplasmic side: GLFG repeats are especially abundant in NUPs in the central region (lacking a charged environment but are enriched in Ser, Thr, Gln, and Asn).</text>
</comment>
<comment type="miscellaneous">
    <text evidence="6">Present with 4760 molecules/cell in log phase SD medium.</text>
</comment>
<comment type="similarity">
    <text evidence="12">Belongs to the nucleoporin GLFG family.</text>
</comment>
<dbReference type="EMBL" id="X68109">
    <property type="protein sequence ID" value="CAA48229.1"/>
    <property type="molecule type" value="Genomic_DNA"/>
</dbReference>
<dbReference type="EMBL" id="Z15040">
    <property type="protein sequence ID" value="CAA78758.1"/>
    <property type="molecule type" value="Genomic_DNA"/>
</dbReference>
<dbReference type="EMBL" id="X84705">
    <property type="protein sequence ID" value="CAA59181.1"/>
    <property type="molecule type" value="Genomic_DNA"/>
</dbReference>
<dbReference type="EMBL" id="Z72694">
    <property type="protein sequence ID" value="CAA96884.1"/>
    <property type="molecule type" value="Genomic_DNA"/>
</dbReference>
<dbReference type="EMBL" id="BK006941">
    <property type="protein sequence ID" value="DAA07941.1"/>
    <property type="molecule type" value="Genomic_DNA"/>
</dbReference>
<dbReference type="PIR" id="S28026">
    <property type="entry name" value="S28026"/>
</dbReference>
<dbReference type="RefSeq" id="NP_011343.1">
    <property type="nucleotide sequence ID" value="NM_001181037.1"/>
</dbReference>
<dbReference type="PDB" id="7N85">
    <property type="method" value="EM"/>
    <property type="resolution" value="7.60 A"/>
    <property type="chains" value="C/F/I/L=1-472"/>
</dbReference>
<dbReference type="PDB" id="7N9F">
    <property type="method" value="EM"/>
    <property type="resolution" value="37.00 A"/>
    <property type="chains" value="C/F/I/L=1-472"/>
</dbReference>
<dbReference type="PDB" id="7WOO">
    <property type="method" value="EM"/>
    <property type="resolution" value="3.71 A"/>
    <property type="chains" value="G/J=1-472"/>
</dbReference>
<dbReference type="PDB" id="7WOT">
    <property type="method" value="EM"/>
    <property type="resolution" value="3.73 A"/>
    <property type="chains" value="G/J/S/V=1-472"/>
</dbReference>
<dbReference type="PDB" id="8TJ5">
    <property type="method" value="EM"/>
    <property type="resolution" value="6.60 A"/>
    <property type="chains" value="C/F/I/L=1-472"/>
</dbReference>
<dbReference type="PDBsum" id="7N85"/>
<dbReference type="PDBsum" id="7N9F"/>
<dbReference type="PDBsum" id="7WOO"/>
<dbReference type="PDBsum" id="7WOT"/>
<dbReference type="PDBsum" id="8TJ5"/>
<dbReference type="EMDB" id="EMD-24232"/>
<dbReference type="EMDB" id="EMD-24258"/>
<dbReference type="EMDB" id="EMD-32653"/>
<dbReference type="EMDB" id="EMD-32658"/>
<dbReference type="EMDB" id="EMD-41300"/>
<dbReference type="SASBDB" id="Q02199"/>
<dbReference type="SMR" id="Q02199"/>
<dbReference type="BioGRID" id="33081">
    <property type="interactions" value="76"/>
</dbReference>
<dbReference type="ComplexPortal" id="CPX-824">
    <property type="entry name" value="Nuclear pore complex"/>
</dbReference>
<dbReference type="DIP" id="DIP-709N"/>
<dbReference type="FunCoup" id="Q02199">
    <property type="interactions" value="184"/>
</dbReference>
<dbReference type="IntAct" id="Q02199">
    <property type="interactions" value="27"/>
</dbReference>
<dbReference type="MINT" id="Q02199"/>
<dbReference type="STRING" id="4932.YGL172W"/>
<dbReference type="TCDB" id="1.I.1.1.1">
    <property type="family name" value="the nuclear pore complex (npc) family"/>
</dbReference>
<dbReference type="GlyGen" id="Q02199">
    <property type="glycosylation" value="1 site"/>
</dbReference>
<dbReference type="iPTMnet" id="Q02199"/>
<dbReference type="PaxDb" id="4932-YGL172W"/>
<dbReference type="PeptideAtlas" id="Q02199"/>
<dbReference type="DNASU" id="852703"/>
<dbReference type="EnsemblFungi" id="YGL172W_mRNA">
    <property type="protein sequence ID" value="YGL172W"/>
    <property type="gene ID" value="YGL172W"/>
</dbReference>
<dbReference type="GeneID" id="852703"/>
<dbReference type="KEGG" id="sce:YGL172W"/>
<dbReference type="AGR" id="SGD:S000003140"/>
<dbReference type="SGD" id="S000003140">
    <property type="gene designation" value="NUP49"/>
</dbReference>
<dbReference type="VEuPathDB" id="FungiDB:YGL172W"/>
<dbReference type="eggNOG" id="KOG0845">
    <property type="taxonomic scope" value="Eukaryota"/>
</dbReference>
<dbReference type="HOGENOM" id="CLU_039862_0_0_1"/>
<dbReference type="InParanoid" id="Q02199"/>
<dbReference type="OMA" id="SHHLKAD"/>
<dbReference type="OrthoDB" id="2538017at2759"/>
<dbReference type="BioCyc" id="YEAST:G3O-30660-MONOMER"/>
<dbReference type="BioGRID-ORCS" id="852703">
    <property type="hits" value="9 hits in 10 CRISPR screens"/>
</dbReference>
<dbReference type="CD-CODE" id="691A1FB1">
    <property type="entry name" value="Nuclear pore complex"/>
</dbReference>
<dbReference type="PRO" id="PR:Q02199"/>
<dbReference type="Proteomes" id="UP000002311">
    <property type="component" value="Chromosome VII"/>
</dbReference>
<dbReference type="RNAct" id="Q02199">
    <property type="molecule type" value="protein"/>
</dbReference>
<dbReference type="GO" id="GO:0005635">
    <property type="term" value="C:nuclear envelope"/>
    <property type="evidence" value="ECO:0007005"/>
    <property type="project" value="SGD"/>
</dbReference>
<dbReference type="GO" id="GO:0031965">
    <property type="term" value="C:nuclear membrane"/>
    <property type="evidence" value="ECO:0007669"/>
    <property type="project" value="UniProtKB-SubCell"/>
</dbReference>
<dbReference type="GO" id="GO:0005643">
    <property type="term" value="C:nuclear pore"/>
    <property type="evidence" value="ECO:0000314"/>
    <property type="project" value="SGD"/>
</dbReference>
<dbReference type="GO" id="GO:0044613">
    <property type="term" value="C:nuclear pore central transport channel"/>
    <property type="evidence" value="ECO:0000314"/>
    <property type="project" value="SGD"/>
</dbReference>
<dbReference type="GO" id="GO:0044614">
    <property type="term" value="C:nuclear pore cytoplasmic filaments"/>
    <property type="evidence" value="ECO:0000318"/>
    <property type="project" value="GO_Central"/>
</dbReference>
<dbReference type="GO" id="GO:0042802">
    <property type="term" value="F:identical protein binding"/>
    <property type="evidence" value="ECO:0000353"/>
    <property type="project" value="IntAct"/>
</dbReference>
<dbReference type="GO" id="GO:0140693">
    <property type="term" value="F:molecular condensate scaffold activity"/>
    <property type="evidence" value="ECO:0000314"/>
    <property type="project" value="DisProt"/>
</dbReference>
<dbReference type="GO" id="GO:0008139">
    <property type="term" value="F:nuclear localization sequence binding"/>
    <property type="evidence" value="ECO:0000318"/>
    <property type="project" value="GO_Central"/>
</dbReference>
<dbReference type="GO" id="GO:0003723">
    <property type="term" value="F:RNA binding"/>
    <property type="evidence" value="ECO:0000318"/>
    <property type="project" value="GO_Central"/>
</dbReference>
<dbReference type="GO" id="GO:0017056">
    <property type="term" value="F:structural constituent of nuclear pore"/>
    <property type="evidence" value="ECO:0000314"/>
    <property type="project" value="SGD"/>
</dbReference>
<dbReference type="GO" id="GO:1990000">
    <property type="term" value="P:amyloid fibril formation"/>
    <property type="evidence" value="ECO:0000353"/>
    <property type="project" value="DisProt"/>
</dbReference>
<dbReference type="GO" id="GO:0006913">
    <property type="term" value="P:nucleocytoplasmic transport"/>
    <property type="evidence" value="ECO:0000303"/>
    <property type="project" value="ComplexPortal"/>
</dbReference>
<dbReference type="GO" id="GO:0016973">
    <property type="term" value="P:poly(A)+ mRNA export from nucleus"/>
    <property type="evidence" value="ECO:0000315"/>
    <property type="project" value="SGD"/>
</dbReference>
<dbReference type="GO" id="GO:0000973">
    <property type="term" value="P:post-transcriptional tethering of RNA polymerase II gene DNA at nuclear periphery"/>
    <property type="evidence" value="ECO:0000318"/>
    <property type="project" value="GO_Central"/>
</dbReference>
<dbReference type="GO" id="GO:0006606">
    <property type="term" value="P:protein import into nucleus"/>
    <property type="evidence" value="ECO:0000315"/>
    <property type="project" value="SGD"/>
</dbReference>
<dbReference type="GO" id="GO:0000055">
    <property type="term" value="P:ribosomal large subunit export from nucleus"/>
    <property type="evidence" value="ECO:0000315"/>
    <property type="project" value="SGD"/>
</dbReference>
<dbReference type="GO" id="GO:0006405">
    <property type="term" value="P:RNA export from nucleus"/>
    <property type="evidence" value="ECO:0000318"/>
    <property type="project" value="GO_Central"/>
</dbReference>
<dbReference type="GO" id="GO:0034398">
    <property type="term" value="P:telomere tethering at nuclear periphery"/>
    <property type="evidence" value="ECO:0000318"/>
    <property type="project" value="GO_Central"/>
</dbReference>
<dbReference type="GO" id="GO:0006409">
    <property type="term" value="P:tRNA export from nucleus"/>
    <property type="evidence" value="ECO:0000315"/>
    <property type="project" value="SGD"/>
</dbReference>
<dbReference type="DisProt" id="DP02122"/>
<dbReference type="InterPro" id="IPR025574">
    <property type="entry name" value="Nucleoporin_FG_rpt"/>
</dbReference>
<dbReference type="InterPro" id="IPR024882">
    <property type="entry name" value="NUP58/p45/49"/>
</dbReference>
<dbReference type="PANTHER" id="PTHR13437">
    <property type="entry name" value="NUCLEOPORIN P58/P45 NUCLEOPORIN-LIKE PROTEIN 1"/>
    <property type="match status" value="1"/>
</dbReference>
<dbReference type="PANTHER" id="PTHR13437:SF2">
    <property type="entry name" value="NUCLEOPORIN P58_P45"/>
    <property type="match status" value="1"/>
</dbReference>
<dbReference type="Pfam" id="PF13634">
    <property type="entry name" value="Nucleoporin_FG"/>
    <property type="match status" value="2"/>
</dbReference>
<name>NUP49_YEAST</name>
<feature type="chain" id="PRO_0000204867" description="Nucleoporin NUP49/NSP49">
    <location>
        <begin position="1"/>
        <end position="472"/>
    </location>
</feature>
<feature type="repeat" description="FG 1">
    <location>
        <begin position="2"/>
        <end position="3"/>
    </location>
</feature>
<feature type="repeat" description="GLFG 1">
    <location>
        <begin position="14"/>
        <end position="17"/>
    </location>
</feature>
<feature type="repeat" description="FG 2">
    <location>
        <begin position="33"/>
        <end position="34"/>
    </location>
</feature>
<feature type="repeat" description="GLFG 2">
    <location>
        <begin position="48"/>
        <end position="51"/>
    </location>
</feature>
<feature type="repeat" description="FG 3">
    <location>
        <begin position="65"/>
        <end position="66"/>
    </location>
</feature>
<feature type="repeat" description="FG 4">
    <location>
        <begin position="77"/>
        <end position="78"/>
    </location>
</feature>
<feature type="repeat" description="GLFG 3">
    <location>
        <begin position="86"/>
        <end position="89"/>
    </location>
</feature>
<feature type="repeat" description="GLFG 4">
    <location>
        <begin position="101"/>
        <end position="104"/>
    </location>
</feature>
<feature type="repeat" description="SLFG 1">
    <location>
        <begin position="113"/>
        <end position="116"/>
    </location>
</feature>
<feature type="repeat" description="GLFG 5">
    <location>
        <begin position="125"/>
        <end position="128"/>
    </location>
</feature>
<feature type="repeat" description="GLFG 6">
    <location>
        <begin position="148"/>
        <end position="151"/>
    </location>
</feature>
<feature type="repeat" description="SLFG 2">
    <location>
        <begin position="159"/>
        <end position="162"/>
    </location>
</feature>
<feature type="repeat" description="GLFG 7; approximate">
    <location>
        <begin position="175"/>
        <end position="178"/>
    </location>
</feature>
<feature type="repeat" description="SLFG 3">
    <location>
        <begin position="185"/>
        <end position="188"/>
    </location>
</feature>
<feature type="repeat" description="GLFG 8">
    <location>
        <begin position="199"/>
        <end position="202"/>
    </location>
</feature>
<feature type="repeat" description="SLFG 4">
    <location>
        <begin position="210"/>
        <end position="213"/>
    </location>
</feature>
<feature type="repeat" description="GLFG 9">
    <location>
        <begin position="233"/>
        <end position="236"/>
    </location>
</feature>
<feature type="region of interest" description="Disordered" evidence="1">
    <location>
        <begin position="28"/>
        <end position="104"/>
    </location>
</feature>
<feature type="region of interest" description="Disordered" evidence="1">
    <location>
        <begin position="211"/>
        <end position="242"/>
    </location>
</feature>
<feature type="compositionally biased region" description="Low complexity" evidence="1">
    <location>
        <begin position="64"/>
        <end position="80"/>
    </location>
</feature>
<feature type="compositionally biased region" description="Low complexity" evidence="1">
    <location>
        <begin position="214"/>
        <end position="226"/>
    </location>
</feature>
<sequence length="472" mass="49142">MFGLNKASSTPAGGLFGQASGASTGNANTGFSFGGTQTGQNTGPSTGGLFGAKPAGSTGGLGASFGQQQQQSQTNAFGGSATTGGGLFGNKPNNTANTGGGLFGANSNSNSGSLFGSNNAQTSRGLFGNNNTNNINNSSSGMNNASAGLFGSKPAGGTSLFGNTSTSSAPAQNQGMFGAKPAGTSLFGNNAGNTTTGGGLFGSKPTGATSLFGSSNNNNNNNNSNNIMSASGGLFGNQQQQLQQQPQMQCALQNLSQLPITPMTRISELPPQIRQEIEQLDQYIQKQVQISHHLKADTIDHDELIDSIPRDVAYLLKSESATSQYLKQDLKKISSFKSLIDEDLLDTQTFSVLLQQLLTPGSKISSNDLDKFFQKKIHLYEKKLEDYCRILSDIETAVNGIDTDLFGAPNNPNSTAITADLGSSEAENLLQLKTGLAAIVSTVIEEFTLFMDIAERIAVLHQKTKTLASLSI</sequence>
<accession>Q02199</accession>
<accession>D6VTY0</accession>
<protein>
    <recommendedName>
        <fullName>Nucleoporin NUP49/NSP49</fullName>
    </recommendedName>
    <alternativeName>
        <fullName>Nuclear pore protein NUP49/NSP49</fullName>
    </alternativeName>
</protein>
<evidence type="ECO:0000256" key="1">
    <source>
        <dbReference type="SAM" id="MobiDB-lite"/>
    </source>
</evidence>
<evidence type="ECO:0000269" key="2">
    <source>
    </source>
</evidence>
<evidence type="ECO:0000269" key="3">
    <source>
    </source>
</evidence>
<evidence type="ECO:0000269" key="4">
    <source>
    </source>
</evidence>
<evidence type="ECO:0000269" key="5">
    <source>
    </source>
</evidence>
<evidence type="ECO:0000269" key="6">
    <source>
    </source>
</evidence>
<evidence type="ECO:0000269" key="7">
    <source>
    </source>
</evidence>
<evidence type="ECO:0000269" key="8">
    <source>
    </source>
</evidence>
<evidence type="ECO:0000269" key="9">
    <source>
    </source>
</evidence>
<evidence type="ECO:0000269" key="10">
    <source>
    </source>
</evidence>
<evidence type="ECO:0000269" key="11">
    <source>
    </source>
</evidence>
<evidence type="ECO:0000305" key="12"/>
<reference key="1">
    <citation type="journal article" date="1992" name="EMBO J.">
        <title>A new subclass of nucleoporins that functionally interact with nuclear pore protein NSP1.</title>
        <authorList>
            <person name="Wimmer C."/>
            <person name="Doye V."/>
            <person name="Grandi P."/>
            <person name="Nehrbass U."/>
            <person name="Hurt E.C."/>
        </authorList>
    </citation>
    <scope>NUCLEOTIDE SEQUENCE [GENOMIC DNA]</scope>
</reference>
<reference key="2">
    <citation type="journal article" date="1992" name="J. Cell Biol.">
        <title>A new family of yeast nuclear pore complex proteins.</title>
        <authorList>
            <person name="Wente S.R."/>
            <person name="Rout M.P."/>
            <person name="Blobel G."/>
        </authorList>
    </citation>
    <scope>NUCLEOTIDE SEQUENCE [GENOMIC DNA]</scope>
</reference>
<reference key="3">
    <citation type="journal article" date="1995" name="Yeast">
        <title>The sequence of an 11.1 kb fragment on the left arm of Saccharomyces cerevisiae chromosome VII reveals six open reading frames including NSP49, KEM1 and four putative new genes.</title>
        <authorList>
            <person name="Bertani I."/>
            <person name="Coglievina M."/>
            <person name="Zaccaria P."/>
            <person name="Klima R."/>
            <person name="Bruschi C.V."/>
        </authorList>
    </citation>
    <scope>NUCLEOTIDE SEQUENCE [GENOMIC DNA]</scope>
    <source>
        <strain>ATCC 96604 / S288c / FY1679</strain>
    </source>
</reference>
<reference key="4">
    <citation type="journal article" date="1997" name="Nature">
        <title>The nucleotide sequence of Saccharomyces cerevisiae chromosome VII.</title>
        <authorList>
            <person name="Tettelin H."/>
            <person name="Agostoni-Carbone M.L."/>
            <person name="Albermann K."/>
            <person name="Albers M."/>
            <person name="Arroyo J."/>
            <person name="Backes U."/>
            <person name="Barreiros T."/>
            <person name="Bertani I."/>
            <person name="Bjourson A.J."/>
            <person name="Brueckner M."/>
            <person name="Bruschi C.V."/>
            <person name="Carignani G."/>
            <person name="Castagnoli L."/>
            <person name="Cerdan E."/>
            <person name="Clemente M.L."/>
            <person name="Coblenz A."/>
            <person name="Coglievina M."/>
            <person name="Coissac E."/>
            <person name="Defoor E."/>
            <person name="Del Bino S."/>
            <person name="Delius H."/>
            <person name="Delneri D."/>
            <person name="de Wergifosse P."/>
            <person name="Dujon B."/>
            <person name="Durand P."/>
            <person name="Entian K.-D."/>
            <person name="Eraso P."/>
            <person name="Escribano V."/>
            <person name="Fabiani L."/>
            <person name="Fartmann B."/>
            <person name="Feroli F."/>
            <person name="Feuermann M."/>
            <person name="Frontali L."/>
            <person name="Garcia-Gonzalez M."/>
            <person name="Garcia-Saez M.I."/>
            <person name="Goffeau A."/>
            <person name="Guerreiro P."/>
            <person name="Hani J."/>
            <person name="Hansen M."/>
            <person name="Hebling U."/>
            <person name="Hernandez K."/>
            <person name="Heumann K."/>
            <person name="Hilger F."/>
            <person name="Hofmann B."/>
            <person name="Indge K.J."/>
            <person name="James C.M."/>
            <person name="Klima R."/>
            <person name="Koetter P."/>
            <person name="Kramer B."/>
            <person name="Kramer W."/>
            <person name="Lauquin G."/>
            <person name="Leuther H."/>
            <person name="Louis E.J."/>
            <person name="Maillier E."/>
            <person name="Marconi A."/>
            <person name="Martegani E."/>
            <person name="Mazon M.J."/>
            <person name="Mazzoni C."/>
            <person name="McReynolds A.D.K."/>
            <person name="Melchioretto P."/>
            <person name="Mewes H.-W."/>
            <person name="Minenkova O."/>
            <person name="Mueller-Auer S."/>
            <person name="Nawrocki A."/>
            <person name="Netter P."/>
            <person name="Neu R."/>
            <person name="Nombela C."/>
            <person name="Oliver S.G."/>
            <person name="Panzeri L."/>
            <person name="Paoluzi S."/>
            <person name="Plevani P."/>
            <person name="Portetelle D."/>
            <person name="Portillo F."/>
            <person name="Potier S."/>
            <person name="Purnelle B."/>
            <person name="Rieger M."/>
            <person name="Riles L."/>
            <person name="Rinaldi T."/>
            <person name="Robben J."/>
            <person name="Rodrigues-Pousada C."/>
            <person name="Rodriguez-Belmonte E."/>
            <person name="Rodriguez-Torres A.M."/>
            <person name="Rose M."/>
            <person name="Ruzzi M."/>
            <person name="Saliola M."/>
            <person name="Sanchez-Perez M."/>
            <person name="Schaefer B."/>
            <person name="Schaefer M."/>
            <person name="Scharfe M."/>
            <person name="Schmidheini T."/>
            <person name="Schreer A."/>
            <person name="Skala J."/>
            <person name="Souciet J.-L."/>
            <person name="Steensma H.Y."/>
            <person name="Talla E."/>
            <person name="Thierry A."/>
            <person name="Vandenbol M."/>
            <person name="van der Aart Q.J.M."/>
            <person name="Van Dyck L."/>
            <person name="Vanoni M."/>
            <person name="Verhasselt P."/>
            <person name="Voet M."/>
            <person name="Volckaert G."/>
            <person name="Wambutt R."/>
            <person name="Watson M.D."/>
            <person name="Weber N."/>
            <person name="Wedler E."/>
            <person name="Wedler H."/>
            <person name="Wipfli P."/>
            <person name="Wolf K."/>
            <person name="Wright L.F."/>
            <person name="Zaccaria P."/>
            <person name="Zimmermann M."/>
            <person name="Zollner A."/>
            <person name="Kleine K."/>
        </authorList>
    </citation>
    <scope>NUCLEOTIDE SEQUENCE [LARGE SCALE GENOMIC DNA]</scope>
    <source>
        <strain>ATCC 204508 / S288c</strain>
    </source>
</reference>
<reference key="5">
    <citation type="journal article" date="2014" name="G3 (Bethesda)">
        <title>The reference genome sequence of Saccharomyces cerevisiae: Then and now.</title>
        <authorList>
            <person name="Engel S.R."/>
            <person name="Dietrich F.S."/>
            <person name="Fisk D.G."/>
            <person name="Binkley G."/>
            <person name="Balakrishnan R."/>
            <person name="Costanzo M.C."/>
            <person name="Dwight S.S."/>
            <person name="Hitz B.C."/>
            <person name="Karra K."/>
            <person name="Nash R.S."/>
            <person name="Weng S."/>
            <person name="Wong E.D."/>
            <person name="Lloyd P."/>
            <person name="Skrzypek M.S."/>
            <person name="Miyasato S.R."/>
            <person name="Simison M."/>
            <person name="Cherry J.M."/>
        </authorList>
    </citation>
    <scope>GENOME REANNOTATION</scope>
    <source>
        <strain>ATCC 204508 / S288c</strain>
    </source>
</reference>
<reference key="6">
    <citation type="journal article" date="1994" name="EMBO J.">
        <title>A novel nuclear pore protein Nup133p with distinct roles in poly(A)+ RNA transport and nuclear pore distribution.</title>
        <authorList>
            <person name="Doye V."/>
            <person name="Wepf R."/>
            <person name="Hurt E.C."/>
        </authorList>
    </citation>
    <scope>FUNCTION IN MRNA EXPORT</scope>
</reference>
<reference key="7">
    <citation type="journal article" date="1996" name="Mol. Cell. Biol.">
        <title>Yeast nucleoporin mutants are defective in pre-tRNA splicing.</title>
        <authorList>
            <person name="Sharma K."/>
            <person name="Fabre E."/>
            <person name="Tekotte H."/>
            <person name="Hurt E.C."/>
            <person name="Tollervey D."/>
        </authorList>
    </citation>
    <scope>FUNCTION IN TRNA EXPORT</scope>
</reference>
<reference key="8">
    <citation type="journal article" date="1997" name="Mol. Biol. Cell">
        <title>In vitro reconstitution of a heterotrimeric nucleoporin complex consisting of recombinant Nsp1p, Nup49p, and Nup57p.</title>
        <authorList>
            <person name="Schlaich N.L."/>
            <person name="Haener M."/>
            <person name="Lustig A."/>
            <person name="Aebi U."/>
            <person name="Hurt E.C."/>
        </authorList>
    </citation>
    <scope>FUNCTION</scope>
    <scope>THE NUP57 SUBCOMPLEX</scope>
</reference>
<reference key="9">
    <citation type="journal article" date="1999" name="J. Cell Biol.">
        <title>A novel in vivo assay reveals inhibition of ribosomal nuclear export in ran-cycle and nucleoporin mutants.</title>
        <authorList>
            <person name="Hurt E.C."/>
            <person name="Hannus S."/>
            <person name="Schmelzl B."/>
            <person name="Lau D.M."/>
            <person name="Tollervey D."/>
            <person name="Simos G."/>
        </authorList>
    </citation>
    <scope>FUNCTION</scope>
    <scope>PRE-RIBOSOME EXPORT</scope>
</reference>
<reference key="10">
    <citation type="journal article" date="2000" name="J. Cell Biol.">
        <title>The yeast nuclear pore complex: composition, architecture, and transport mechanism.</title>
        <authorList>
            <person name="Rout M.P."/>
            <person name="Aitchison J.D."/>
            <person name="Suprapto A."/>
            <person name="Hjertaas K."/>
            <person name="Zhao Y."/>
            <person name="Chait B.T."/>
        </authorList>
    </citation>
    <scope>FUNCTION</scope>
    <scope>IDENTIFICATION IN THE NUCLEAR PORE COMPLEX</scope>
    <scope>SUBCELLULAR LOCATION</scope>
</reference>
<reference key="11">
    <citation type="journal article" date="2001" name="J. Biol. Chem.">
        <title>Proteomic analysis of nucleoporin interacting proteins.</title>
        <authorList>
            <person name="Allen N.P."/>
            <person name="Huang L."/>
            <person name="Burlingame A."/>
            <person name="Rexach M."/>
        </authorList>
    </citation>
    <scope>FUNCTION</scope>
    <scope>NUCLEOPORIN INTERACTING PROTEINS</scope>
</reference>
<reference key="12">
    <citation type="journal article" date="2001" name="Mol. Cell. Biol.">
        <title>The Nsp1p carboxy-terminal domain is organized into functionally distinct coiled-coil regions required for assembly of nucleoporin subcomplexes and nucleocytoplasmic transport.</title>
        <authorList>
            <person name="Bailer S.M."/>
            <person name="Balduf C."/>
            <person name="Hurt E.C."/>
        </authorList>
    </citation>
    <scope>FUNCTION</scope>
    <scope>NPC ASSEMBLY</scope>
</reference>
<reference key="13">
    <citation type="journal article" date="2003" name="Nature">
        <title>Global analysis of protein expression in yeast.</title>
        <authorList>
            <person name="Ghaemmaghami S."/>
            <person name="Huh W.-K."/>
            <person name="Bower K."/>
            <person name="Howson R.W."/>
            <person name="Belle A."/>
            <person name="Dephoure N."/>
            <person name="O'Shea E.K."/>
            <person name="Weissman J.S."/>
        </authorList>
    </citation>
    <scope>LEVEL OF PROTEIN EXPRESSION [LARGE SCALE ANALYSIS]</scope>
</reference>
<reference key="14">
    <citation type="journal article" date="2003" name="Proc. Natl. Acad. Sci. U.S.A.">
        <title>Disorder in the nuclear pore complex: the FG repeat regions of nucleoporins are natively unfolded.</title>
        <authorList>
            <person name="Denning D.P."/>
            <person name="Patel S.S."/>
            <person name="Uversky V."/>
            <person name="Fink A.L."/>
            <person name="Rexach M."/>
        </authorList>
    </citation>
    <scope>FUNCTION</scope>
    <scope>FG REPEAT STRUCTURE</scope>
</reference>
<reference key="15">
    <citation type="journal article" date="2004" name="Nat. Cell Biol.">
        <title>Minimal nuclear pore complexes define FG repeat domains essential for transport.</title>
        <authorList>
            <person name="Strawn L.A."/>
            <person name="Shen T.X."/>
            <person name="Shulga N."/>
            <person name="Goldfarb D.S."/>
            <person name="Wente S.R."/>
        </authorList>
    </citation>
    <scope>FUNCTION</scope>
    <scope>FG REPEATS IN NPC TRANSPORT</scope>
</reference>
<reference key="16">
    <citation type="journal article" date="2003" name="Dev. Cell">
        <title>Peering through the pore: nuclear pore complex structure, assembly, and function.</title>
        <authorList>
            <person name="Suntharalingam M."/>
            <person name="Wente S.R."/>
        </authorList>
    </citation>
    <scope>REVIEW</scope>
</reference>
<organism>
    <name type="scientific">Saccharomyces cerevisiae (strain ATCC 204508 / S288c)</name>
    <name type="common">Baker's yeast</name>
    <dbReference type="NCBI Taxonomy" id="559292"/>
    <lineage>
        <taxon>Eukaryota</taxon>
        <taxon>Fungi</taxon>
        <taxon>Dikarya</taxon>
        <taxon>Ascomycota</taxon>
        <taxon>Saccharomycotina</taxon>
        <taxon>Saccharomycetes</taxon>
        <taxon>Saccharomycetales</taxon>
        <taxon>Saccharomycetaceae</taxon>
        <taxon>Saccharomyces</taxon>
    </lineage>
</organism>